<reference key="1">
    <citation type="journal article" date="2006" name="Mol. Microbiol.">
        <title>Role of pathogenicity island-associated integrases in the genome plasticity of uropathogenic Escherichia coli strain 536.</title>
        <authorList>
            <person name="Hochhut B."/>
            <person name="Wilde C."/>
            <person name="Balling G."/>
            <person name="Middendorf B."/>
            <person name="Dobrindt U."/>
            <person name="Brzuszkiewicz E."/>
            <person name="Gottschalk G."/>
            <person name="Carniel E."/>
            <person name="Hacker J."/>
        </authorList>
    </citation>
    <scope>NUCLEOTIDE SEQUENCE [LARGE SCALE GENOMIC DNA]</scope>
    <source>
        <strain>536 / UPEC</strain>
    </source>
</reference>
<name>GLMU_ECOL5</name>
<sequence>MLNNAMSVVILAAGKGTRMYSDLPKVLHTLAGKAMVQHVIDAANELGAAHVHLVYGHGGDLLKQALKDDNLNWVLQAEQLGTGHAMQQAAPFFADDEDILMLYGDVPLISVETLQHLRDAKPQGGIGLLTVKLDDPTGYGRITRENGKVTGIVEHKDATDEQRQIQEINTGILIANGADMKRWLAKLTNNNAQGEYYITDIIALAYQEGREIVAVHPQRLSEVEGVNNRLQLSRLERVYQSEQAEKLLLAGVMLRDPARFDLRGTLTHGRDVEIDTNVIIEGNVTLGHRVKIGTGCVIKNSVIGDDCEISPYTVVEDANLAAACTIGPFARLRPGAELLEGAHVGNFVEMKKARLGKGSKAGHLTYLGDAEIGDNVNIGAGTITCNYDGANKFKTIIGDDVFVGSDTQLVAPVTVGKGATIAAGTTVTRNVGENALAISRVPQTQKEGWRRPVKKK</sequence>
<proteinExistence type="inferred from homology"/>
<dbReference type="EC" id="2.7.7.23" evidence="1"/>
<dbReference type="EC" id="2.3.1.157" evidence="1"/>
<dbReference type="EMBL" id="CP000247">
    <property type="protein sequence ID" value="ABG71900.1"/>
    <property type="molecule type" value="Genomic_DNA"/>
</dbReference>
<dbReference type="RefSeq" id="WP_000933716.1">
    <property type="nucleotide sequence ID" value="NC_008253.1"/>
</dbReference>
<dbReference type="SMR" id="Q0TAX9"/>
<dbReference type="KEGG" id="ecp:ECP_3929"/>
<dbReference type="HOGENOM" id="CLU_029499_15_2_6"/>
<dbReference type="UniPathway" id="UPA00113">
    <property type="reaction ID" value="UER00532"/>
</dbReference>
<dbReference type="UniPathway" id="UPA00113">
    <property type="reaction ID" value="UER00533"/>
</dbReference>
<dbReference type="UniPathway" id="UPA00973"/>
<dbReference type="Proteomes" id="UP000009182">
    <property type="component" value="Chromosome"/>
</dbReference>
<dbReference type="GO" id="GO:0005737">
    <property type="term" value="C:cytoplasm"/>
    <property type="evidence" value="ECO:0007669"/>
    <property type="project" value="UniProtKB-SubCell"/>
</dbReference>
<dbReference type="GO" id="GO:0016020">
    <property type="term" value="C:membrane"/>
    <property type="evidence" value="ECO:0007669"/>
    <property type="project" value="GOC"/>
</dbReference>
<dbReference type="GO" id="GO:0019134">
    <property type="term" value="F:glucosamine-1-phosphate N-acetyltransferase activity"/>
    <property type="evidence" value="ECO:0007669"/>
    <property type="project" value="UniProtKB-UniRule"/>
</dbReference>
<dbReference type="GO" id="GO:0000287">
    <property type="term" value="F:magnesium ion binding"/>
    <property type="evidence" value="ECO:0007669"/>
    <property type="project" value="UniProtKB-UniRule"/>
</dbReference>
<dbReference type="GO" id="GO:0003977">
    <property type="term" value="F:UDP-N-acetylglucosamine diphosphorylase activity"/>
    <property type="evidence" value="ECO:0007669"/>
    <property type="project" value="UniProtKB-UniRule"/>
</dbReference>
<dbReference type="GO" id="GO:0000902">
    <property type="term" value="P:cell morphogenesis"/>
    <property type="evidence" value="ECO:0007669"/>
    <property type="project" value="UniProtKB-UniRule"/>
</dbReference>
<dbReference type="GO" id="GO:0071555">
    <property type="term" value="P:cell wall organization"/>
    <property type="evidence" value="ECO:0007669"/>
    <property type="project" value="UniProtKB-KW"/>
</dbReference>
<dbReference type="GO" id="GO:0009245">
    <property type="term" value="P:lipid A biosynthetic process"/>
    <property type="evidence" value="ECO:0007669"/>
    <property type="project" value="UniProtKB-UniRule"/>
</dbReference>
<dbReference type="GO" id="GO:0009252">
    <property type="term" value="P:peptidoglycan biosynthetic process"/>
    <property type="evidence" value="ECO:0007669"/>
    <property type="project" value="UniProtKB-UniRule"/>
</dbReference>
<dbReference type="GO" id="GO:0008360">
    <property type="term" value="P:regulation of cell shape"/>
    <property type="evidence" value="ECO:0007669"/>
    <property type="project" value="UniProtKB-KW"/>
</dbReference>
<dbReference type="GO" id="GO:0006048">
    <property type="term" value="P:UDP-N-acetylglucosamine biosynthetic process"/>
    <property type="evidence" value="ECO:0007669"/>
    <property type="project" value="UniProtKB-UniPathway"/>
</dbReference>
<dbReference type="CDD" id="cd02540">
    <property type="entry name" value="GT2_GlmU_N_bac"/>
    <property type="match status" value="1"/>
</dbReference>
<dbReference type="CDD" id="cd03353">
    <property type="entry name" value="LbH_GlmU_C"/>
    <property type="match status" value="1"/>
</dbReference>
<dbReference type="FunFam" id="2.160.10.10:FF:000011">
    <property type="entry name" value="Bifunctional protein GlmU"/>
    <property type="match status" value="1"/>
</dbReference>
<dbReference type="FunFam" id="3.90.550.10:FF:000006">
    <property type="entry name" value="Bifunctional protein GlmU"/>
    <property type="match status" value="1"/>
</dbReference>
<dbReference type="Gene3D" id="2.160.10.10">
    <property type="entry name" value="Hexapeptide repeat proteins"/>
    <property type="match status" value="1"/>
</dbReference>
<dbReference type="Gene3D" id="3.90.550.10">
    <property type="entry name" value="Spore Coat Polysaccharide Biosynthesis Protein SpsA, Chain A"/>
    <property type="match status" value="1"/>
</dbReference>
<dbReference type="HAMAP" id="MF_01631">
    <property type="entry name" value="GlmU"/>
    <property type="match status" value="1"/>
</dbReference>
<dbReference type="InterPro" id="IPR005882">
    <property type="entry name" value="Bifunctional_GlmU"/>
</dbReference>
<dbReference type="InterPro" id="IPR050065">
    <property type="entry name" value="GlmU-like"/>
</dbReference>
<dbReference type="InterPro" id="IPR038009">
    <property type="entry name" value="GlmU_C_LbH"/>
</dbReference>
<dbReference type="InterPro" id="IPR001451">
    <property type="entry name" value="Hexapep"/>
</dbReference>
<dbReference type="InterPro" id="IPR018357">
    <property type="entry name" value="Hexapep_transf_CS"/>
</dbReference>
<dbReference type="InterPro" id="IPR025877">
    <property type="entry name" value="MobA-like_NTP_Trfase"/>
</dbReference>
<dbReference type="InterPro" id="IPR029044">
    <property type="entry name" value="Nucleotide-diphossugar_trans"/>
</dbReference>
<dbReference type="InterPro" id="IPR011004">
    <property type="entry name" value="Trimer_LpxA-like_sf"/>
</dbReference>
<dbReference type="NCBIfam" id="TIGR01173">
    <property type="entry name" value="glmU"/>
    <property type="match status" value="1"/>
</dbReference>
<dbReference type="NCBIfam" id="NF006986">
    <property type="entry name" value="PRK09451.1"/>
    <property type="match status" value="1"/>
</dbReference>
<dbReference type="PANTHER" id="PTHR43584:SF3">
    <property type="entry name" value="BIFUNCTIONAL PROTEIN GLMU"/>
    <property type="match status" value="1"/>
</dbReference>
<dbReference type="PANTHER" id="PTHR43584">
    <property type="entry name" value="NUCLEOTIDYL TRANSFERASE"/>
    <property type="match status" value="1"/>
</dbReference>
<dbReference type="Pfam" id="PF00132">
    <property type="entry name" value="Hexapep"/>
    <property type="match status" value="1"/>
</dbReference>
<dbReference type="Pfam" id="PF12804">
    <property type="entry name" value="NTP_transf_3"/>
    <property type="match status" value="1"/>
</dbReference>
<dbReference type="SUPFAM" id="SSF53448">
    <property type="entry name" value="Nucleotide-diphospho-sugar transferases"/>
    <property type="match status" value="1"/>
</dbReference>
<dbReference type="SUPFAM" id="SSF51161">
    <property type="entry name" value="Trimeric LpxA-like enzymes"/>
    <property type="match status" value="1"/>
</dbReference>
<dbReference type="PROSITE" id="PS00101">
    <property type="entry name" value="HEXAPEP_TRANSFERASES"/>
    <property type="match status" value="1"/>
</dbReference>
<organism>
    <name type="scientific">Escherichia coli O6:K15:H31 (strain 536 / UPEC)</name>
    <dbReference type="NCBI Taxonomy" id="362663"/>
    <lineage>
        <taxon>Bacteria</taxon>
        <taxon>Pseudomonadati</taxon>
        <taxon>Pseudomonadota</taxon>
        <taxon>Gammaproteobacteria</taxon>
        <taxon>Enterobacterales</taxon>
        <taxon>Enterobacteriaceae</taxon>
        <taxon>Escherichia</taxon>
    </lineage>
</organism>
<protein>
    <recommendedName>
        <fullName evidence="1">Bifunctional protein GlmU</fullName>
    </recommendedName>
    <domain>
        <recommendedName>
            <fullName evidence="1">UDP-N-acetylglucosamine pyrophosphorylase</fullName>
            <ecNumber evidence="1">2.7.7.23</ecNumber>
        </recommendedName>
        <alternativeName>
            <fullName evidence="1">N-acetylglucosamine-1-phosphate uridyltransferase</fullName>
        </alternativeName>
    </domain>
    <domain>
        <recommendedName>
            <fullName evidence="1">Glucosamine-1-phosphate N-acetyltransferase</fullName>
            <ecNumber evidence="1">2.3.1.157</ecNumber>
        </recommendedName>
    </domain>
</protein>
<comment type="function">
    <text evidence="1">Catalyzes the last two sequential reactions in the de novo biosynthetic pathway for UDP-N-acetylglucosamine (UDP-GlcNAc). The C-terminal domain catalyzes the transfer of acetyl group from acetyl coenzyme A to glucosamine-1-phosphate (GlcN-1-P) to produce N-acetylglucosamine-1-phosphate (GlcNAc-1-P), which is converted into UDP-GlcNAc by the transfer of uridine 5-monophosphate (from uridine 5-triphosphate), a reaction catalyzed by the N-terminal domain.</text>
</comment>
<comment type="catalytic activity">
    <reaction evidence="1">
        <text>alpha-D-glucosamine 1-phosphate + acetyl-CoA = N-acetyl-alpha-D-glucosamine 1-phosphate + CoA + H(+)</text>
        <dbReference type="Rhea" id="RHEA:13725"/>
        <dbReference type="ChEBI" id="CHEBI:15378"/>
        <dbReference type="ChEBI" id="CHEBI:57287"/>
        <dbReference type="ChEBI" id="CHEBI:57288"/>
        <dbReference type="ChEBI" id="CHEBI:57776"/>
        <dbReference type="ChEBI" id="CHEBI:58516"/>
        <dbReference type="EC" id="2.3.1.157"/>
    </reaction>
</comment>
<comment type="catalytic activity">
    <reaction evidence="1">
        <text>N-acetyl-alpha-D-glucosamine 1-phosphate + UTP + H(+) = UDP-N-acetyl-alpha-D-glucosamine + diphosphate</text>
        <dbReference type="Rhea" id="RHEA:13509"/>
        <dbReference type="ChEBI" id="CHEBI:15378"/>
        <dbReference type="ChEBI" id="CHEBI:33019"/>
        <dbReference type="ChEBI" id="CHEBI:46398"/>
        <dbReference type="ChEBI" id="CHEBI:57705"/>
        <dbReference type="ChEBI" id="CHEBI:57776"/>
        <dbReference type="EC" id="2.7.7.23"/>
    </reaction>
</comment>
<comment type="cofactor">
    <cofactor evidence="1">
        <name>Mg(2+)</name>
        <dbReference type="ChEBI" id="CHEBI:18420"/>
    </cofactor>
    <text evidence="1">Binds 1 Mg(2+) ion per subunit.</text>
</comment>
<comment type="pathway">
    <text evidence="1">Nucleotide-sugar biosynthesis; UDP-N-acetyl-alpha-D-glucosamine biosynthesis; N-acetyl-alpha-D-glucosamine 1-phosphate from alpha-D-glucosamine 6-phosphate (route II): step 2/2.</text>
</comment>
<comment type="pathway">
    <text evidence="1">Nucleotide-sugar biosynthesis; UDP-N-acetyl-alpha-D-glucosamine biosynthesis; UDP-N-acetyl-alpha-D-glucosamine from N-acetyl-alpha-D-glucosamine 1-phosphate: step 1/1.</text>
</comment>
<comment type="pathway">
    <text evidence="1">Bacterial outer membrane biogenesis; LPS lipid A biosynthesis.</text>
</comment>
<comment type="subunit">
    <text evidence="1">Homotrimer.</text>
</comment>
<comment type="subcellular location">
    <subcellularLocation>
        <location evidence="1">Cytoplasm</location>
    </subcellularLocation>
</comment>
<comment type="similarity">
    <text evidence="1">In the N-terminal section; belongs to the N-acetylglucosamine-1-phosphate uridyltransferase family.</text>
</comment>
<comment type="similarity">
    <text evidence="1">In the C-terminal section; belongs to the transferase hexapeptide repeat family.</text>
</comment>
<gene>
    <name evidence="1" type="primary">glmU</name>
    <name type="ordered locus">ECP_3929</name>
</gene>
<keyword id="KW-0012">Acyltransferase</keyword>
<keyword id="KW-0133">Cell shape</keyword>
<keyword id="KW-0961">Cell wall biogenesis/degradation</keyword>
<keyword id="KW-0963">Cytoplasm</keyword>
<keyword id="KW-0460">Magnesium</keyword>
<keyword id="KW-0479">Metal-binding</keyword>
<keyword id="KW-0511">Multifunctional enzyme</keyword>
<keyword id="KW-0548">Nucleotidyltransferase</keyword>
<keyword id="KW-0573">Peptidoglycan synthesis</keyword>
<keyword id="KW-0677">Repeat</keyword>
<keyword id="KW-0808">Transferase</keyword>
<evidence type="ECO:0000255" key="1">
    <source>
        <dbReference type="HAMAP-Rule" id="MF_01631"/>
    </source>
</evidence>
<feature type="chain" id="PRO_0000263129" description="Bifunctional protein GlmU">
    <location>
        <begin position="1"/>
        <end position="456"/>
    </location>
</feature>
<feature type="region of interest" description="Pyrophosphorylase" evidence="1">
    <location>
        <begin position="1"/>
        <end position="229"/>
    </location>
</feature>
<feature type="region of interest" description="Linker" evidence="1">
    <location>
        <begin position="230"/>
        <end position="250"/>
    </location>
</feature>
<feature type="region of interest" description="N-acetyltransferase" evidence="1">
    <location>
        <begin position="251"/>
        <end position="456"/>
    </location>
</feature>
<feature type="active site" description="Proton acceptor" evidence="1">
    <location>
        <position position="363"/>
    </location>
</feature>
<feature type="binding site" evidence="1">
    <location>
        <begin position="11"/>
        <end position="14"/>
    </location>
    <ligand>
        <name>UDP-N-acetyl-alpha-D-glucosamine</name>
        <dbReference type="ChEBI" id="CHEBI:57705"/>
    </ligand>
</feature>
<feature type="binding site" evidence="1">
    <location>
        <position position="25"/>
    </location>
    <ligand>
        <name>UDP-N-acetyl-alpha-D-glucosamine</name>
        <dbReference type="ChEBI" id="CHEBI:57705"/>
    </ligand>
</feature>
<feature type="binding site" evidence="1">
    <location>
        <position position="76"/>
    </location>
    <ligand>
        <name>UDP-N-acetyl-alpha-D-glucosamine</name>
        <dbReference type="ChEBI" id="CHEBI:57705"/>
    </ligand>
</feature>
<feature type="binding site" evidence="1">
    <location>
        <begin position="81"/>
        <end position="82"/>
    </location>
    <ligand>
        <name>UDP-N-acetyl-alpha-D-glucosamine</name>
        <dbReference type="ChEBI" id="CHEBI:57705"/>
    </ligand>
</feature>
<feature type="binding site" evidence="1">
    <location>
        <begin position="103"/>
        <end position="105"/>
    </location>
    <ligand>
        <name>UDP-N-acetyl-alpha-D-glucosamine</name>
        <dbReference type="ChEBI" id="CHEBI:57705"/>
    </ligand>
</feature>
<feature type="binding site" evidence="1">
    <location>
        <position position="105"/>
    </location>
    <ligand>
        <name>Mg(2+)</name>
        <dbReference type="ChEBI" id="CHEBI:18420"/>
    </ligand>
</feature>
<feature type="binding site" evidence="1">
    <location>
        <position position="140"/>
    </location>
    <ligand>
        <name>UDP-N-acetyl-alpha-D-glucosamine</name>
        <dbReference type="ChEBI" id="CHEBI:57705"/>
    </ligand>
</feature>
<feature type="binding site" evidence="1">
    <location>
        <position position="154"/>
    </location>
    <ligand>
        <name>UDP-N-acetyl-alpha-D-glucosamine</name>
        <dbReference type="ChEBI" id="CHEBI:57705"/>
    </ligand>
</feature>
<feature type="binding site" evidence="1">
    <location>
        <position position="169"/>
    </location>
    <ligand>
        <name>UDP-N-acetyl-alpha-D-glucosamine</name>
        <dbReference type="ChEBI" id="CHEBI:57705"/>
    </ligand>
</feature>
<feature type="binding site" evidence="1">
    <location>
        <position position="227"/>
    </location>
    <ligand>
        <name>Mg(2+)</name>
        <dbReference type="ChEBI" id="CHEBI:18420"/>
    </ligand>
</feature>
<feature type="binding site" evidence="1">
    <location>
        <position position="227"/>
    </location>
    <ligand>
        <name>UDP-N-acetyl-alpha-D-glucosamine</name>
        <dbReference type="ChEBI" id="CHEBI:57705"/>
    </ligand>
</feature>
<feature type="binding site" evidence="1">
    <location>
        <position position="333"/>
    </location>
    <ligand>
        <name>UDP-N-acetyl-alpha-D-glucosamine</name>
        <dbReference type="ChEBI" id="CHEBI:57705"/>
    </ligand>
</feature>
<feature type="binding site" evidence="1">
    <location>
        <position position="351"/>
    </location>
    <ligand>
        <name>UDP-N-acetyl-alpha-D-glucosamine</name>
        <dbReference type="ChEBI" id="CHEBI:57705"/>
    </ligand>
</feature>
<feature type="binding site" evidence="1">
    <location>
        <position position="366"/>
    </location>
    <ligand>
        <name>UDP-N-acetyl-alpha-D-glucosamine</name>
        <dbReference type="ChEBI" id="CHEBI:57705"/>
    </ligand>
</feature>
<feature type="binding site" evidence="1">
    <location>
        <position position="377"/>
    </location>
    <ligand>
        <name>UDP-N-acetyl-alpha-D-glucosamine</name>
        <dbReference type="ChEBI" id="CHEBI:57705"/>
    </ligand>
</feature>
<feature type="binding site" evidence="1">
    <location>
        <position position="380"/>
    </location>
    <ligand>
        <name>acetyl-CoA</name>
        <dbReference type="ChEBI" id="CHEBI:57288"/>
    </ligand>
</feature>
<feature type="binding site" evidence="1">
    <location>
        <begin position="386"/>
        <end position="387"/>
    </location>
    <ligand>
        <name>acetyl-CoA</name>
        <dbReference type="ChEBI" id="CHEBI:57288"/>
    </ligand>
</feature>
<feature type="binding site" evidence="1">
    <location>
        <position position="405"/>
    </location>
    <ligand>
        <name>acetyl-CoA</name>
        <dbReference type="ChEBI" id="CHEBI:57288"/>
    </ligand>
</feature>
<feature type="binding site" evidence="1">
    <location>
        <position position="423"/>
    </location>
    <ligand>
        <name>acetyl-CoA</name>
        <dbReference type="ChEBI" id="CHEBI:57288"/>
    </ligand>
</feature>
<feature type="binding site" evidence="1">
    <location>
        <position position="440"/>
    </location>
    <ligand>
        <name>acetyl-CoA</name>
        <dbReference type="ChEBI" id="CHEBI:57288"/>
    </ligand>
</feature>
<accession>Q0TAX9</accession>